<keyword id="KW-0963">Cytoplasm</keyword>
<keyword id="KW-0460">Magnesium</keyword>
<keyword id="KW-0479">Metal-binding</keyword>
<keyword id="KW-0566">Pantothenate biosynthesis</keyword>
<keyword id="KW-0808">Transferase</keyword>
<proteinExistence type="inferred from homology"/>
<evidence type="ECO:0000255" key="1">
    <source>
        <dbReference type="HAMAP-Rule" id="MF_00156"/>
    </source>
</evidence>
<evidence type="ECO:0000305" key="2"/>
<feature type="chain" id="PRO_0000297385" description="3-methyl-2-oxobutanoate hydroxymethyltransferase">
    <location>
        <begin position="1"/>
        <end position="272"/>
    </location>
</feature>
<feature type="active site" description="Proton acceptor" evidence="1">
    <location>
        <position position="179"/>
    </location>
</feature>
<feature type="binding site" evidence="1">
    <location>
        <begin position="43"/>
        <end position="44"/>
    </location>
    <ligand>
        <name>3-methyl-2-oxobutanoate</name>
        <dbReference type="ChEBI" id="CHEBI:11851"/>
    </ligand>
</feature>
<feature type="binding site" evidence="1">
    <location>
        <position position="43"/>
    </location>
    <ligand>
        <name>Mg(2+)</name>
        <dbReference type="ChEBI" id="CHEBI:18420"/>
    </ligand>
</feature>
<feature type="binding site" evidence="1">
    <location>
        <position position="82"/>
    </location>
    <ligand>
        <name>3-methyl-2-oxobutanoate</name>
        <dbReference type="ChEBI" id="CHEBI:11851"/>
    </ligand>
</feature>
<feature type="binding site" evidence="1">
    <location>
        <position position="82"/>
    </location>
    <ligand>
        <name>Mg(2+)</name>
        <dbReference type="ChEBI" id="CHEBI:18420"/>
    </ligand>
</feature>
<feature type="binding site" evidence="1">
    <location>
        <position position="112"/>
    </location>
    <ligand>
        <name>3-methyl-2-oxobutanoate</name>
        <dbReference type="ChEBI" id="CHEBI:11851"/>
    </ligand>
</feature>
<feature type="binding site" evidence="1">
    <location>
        <position position="114"/>
    </location>
    <ligand>
        <name>Mg(2+)</name>
        <dbReference type="ChEBI" id="CHEBI:18420"/>
    </ligand>
</feature>
<organism>
    <name type="scientific">Staphylococcus aureus (strain USA300)</name>
    <dbReference type="NCBI Taxonomy" id="367830"/>
    <lineage>
        <taxon>Bacteria</taxon>
        <taxon>Bacillati</taxon>
        <taxon>Bacillota</taxon>
        <taxon>Bacilli</taxon>
        <taxon>Bacillales</taxon>
        <taxon>Staphylococcaceae</taxon>
        <taxon>Staphylococcus</taxon>
    </lineage>
</organism>
<reference key="1">
    <citation type="journal article" date="2006" name="Lancet">
        <title>Complete genome sequence of USA300, an epidemic clone of community-acquired meticillin-resistant Staphylococcus aureus.</title>
        <authorList>
            <person name="Diep B.A."/>
            <person name="Gill S.R."/>
            <person name="Chang R.F."/>
            <person name="Phan T.H."/>
            <person name="Chen J.H."/>
            <person name="Davidson M.G."/>
            <person name="Lin F."/>
            <person name="Lin J."/>
            <person name="Carleton H.A."/>
            <person name="Mongodin E.F."/>
            <person name="Sensabaugh G.F."/>
            <person name="Perdreau-Remington F."/>
        </authorList>
    </citation>
    <scope>NUCLEOTIDE SEQUENCE [LARGE SCALE GENOMIC DNA]</scope>
    <source>
        <strain>USA300</strain>
    </source>
</reference>
<dbReference type="EC" id="2.1.2.11" evidence="1"/>
<dbReference type="EMBL" id="CP000255">
    <property type="protein sequence ID" value="ABD22920.1"/>
    <property type="status" value="ALT_INIT"/>
    <property type="molecule type" value="Genomic_DNA"/>
</dbReference>
<dbReference type="RefSeq" id="WP_000860047.1">
    <property type="nucleotide sequence ID" value="NZ_CP027476.1"/>
</dbReference>
<dbReference type="SMR" id="Q2FDR0"/>
<dbReference type="KEGG" id="saa:SAUSA300_2534"/>
<dbReference type="HOGENOM" id="CLU_036645_1_0_9"/>
<dbReference type="OMA" id="VLVWTDM"/>
<dbReference type="UniPathway" id="UPA00028">
    <property type="reaction ID" value="UER00003"/>
</dbReference>
<dbReference type="Proteomes" id="UP000001939">
    <property type="component" value="Chromosome"/>
</dbReference>
<dbReference type="GO" id="GO:0005737">
    <property type="term" value="C:cytoplasm"/>
    <property type="evidence" value="ECO:0007669"/>
    <property type="project" value="UniProtKB-SubCell"/>
</dbReference>
<dbReference type="GO" id="GO:0003864">
    <property type="term" value="F:3-methyl-2-oxobutanoate hydroxymethyltransferase activity"/>
    <property type="evidence" value="ECO:0007669"/>
    <property type="project" value="UniProtKB-UniRule"/>
</dbReference>
<dbReference type="GO" id="GO:0000287">
    <property type="term" value="F:magnesium ion binding"/>
    <property type="evidence" value="ECO:0007669"/>
    <property type="project" value="TreeGrafter"/>
</dbReference>
<dbReference type="GO" id="GO:0015940">
    <property type="term" value="P:pantothenate biosynthetic process"/>
    <property type="evidence" value="ECO:0007669"/>
    <property type="project" value="UniProtKB-UniRule"/>
</dbReference>
<dbReference type="CDD" id="cd06557">
    <property type="entry name" value="KPHMT-like"/>
    <property type="match status" value="1"/>
</dbReference>
<dbReference type="FunFam" id="3.20.20.60:FF:000030">
    <property type="entry name" value="3-methyl-2-oxobutanoate hydroxymethyltransferase"/>
    <property type="match status" value="1"/>
</dbReference>
<dbReference type="Gene3D" id="3.20.20.60">
    <property type="entry name" value="Phosphoenolpyruvate-binding domains"/>
    <property type="match status" value="1"/>
</dbReference>
<dbReference type="HAMAP" id="MF_00156">
    <property type="entry name" value="PanB"/>
    <property type="match status" value="1"/>
</dbReference>
<dbReference type="InterPro" id="IPR003700">
    <property type="entry name" value="Pantoate_hydroxy_MeTrfase"/>
</dbReference>
<dbReference type="InterPro" id="IPR015813">
    <property type="entry name" value="Pyrv/PenolPyrv_kinase-like_dom"/>
</dbReference>
<dbReference type="InterPro" id="IPR040442">
    <property type="entry name" value="Pyrv_kinase-like_dom_sf"/>
</dbReference>
<dbReference type="NCBIfam" id="TIGR00222">
    <property type="entry name" value="panB"/>
    <property type="match status" value="1"/>
</dbReference>
<dbReference type="NCBIfam" id="NF001452">
    <property type="entry name" value="PRK00311.1"/>
    <property type="match status" value="1"/>
</dbReference>
<dbReference type="PANTHER" id="PTHR20881">
    <property type="entry name" value="3-METHYL-2-OXOBUTANOATE HYDROXYMETHYLTRANSFERASE"/>
    <property type="match status" value="1"/>
</dbReference>
<dbReference type="PANTHER" id="PTHR20881:SF0">
    <property type="entry name" value="3-METHYL-2-OXOBUTANOATE HYDROXYMETHYLTRANSFERASE"/>
    <property type="match status" value="1"/>
</dbReference>
<dbReference type="Pfam" id="PF02548">
    <property type="entry name" value="Pantoate_transf"/>
    <property type="match status" value="1"/>
</dbReference>
<dbReference type="PIRSF" id="PIRSF000388">
    <property type="entry name" value="Pantoate_hydroxy_MeTrfase"/>
    <property type="match status" value="1"/>
</dbReference>
<dbReference type="SUPFAM" id="SSF51621">
    <property type="entry name" value="Phosphoenolpyruvate/pyruvate domain"/>
    <property type="match status" value="1"/>
</dbReference>
<accession>Q2FDR0</accession>
<gene>
    <name evidence="1" type="primary">panB</name>
    <name type="ordered locus">SAUSA300_2534</name>
</gene>
<name>PANB_STAA3</name>
<sequence>MKTVSQLIDMKQKQTKISMVTAYDFPSAKQVEAAGIDMILVGDSLGMTVLGYESTVQVTLADMIHHGRAVRRGAPNTFVVVDMPIGAVGISMTQDLNHALKLYQETNANAIKAEGAHITPFIEKATAIGIPVVAHLGLTPQSVGVMGYKLQGATKEAAEQLILDAKNVEQAGAVALVLEAIPNDLAEEISKHLTIPVIGIGAGKGTDGQVLVYHDMLNYGVEHKAKFVKQFADFSVGVDGLKQYDQEVKSGAFPSEEYTYKKKIMNEVNNND</sequence>
<protein>
    <recommendedName>
        <fullName evidence="1">3-methyl-2-oxobutanoate hydroxymethyltransferase</fullName>
        <ecNumber evidence="1">2.1.2.11</ecNumber>
    </recommendedName>
    <alternativeName>
        <fullName evidence="1">Ketopantoate hydroxymethyltransferase</fullName>
        <shortName evidence="1">KPHMT</shortName>
    </alternativeName>
</protein>
<comment type="function">
    <text evidence="1">Catalyzes the reversible reaction in which hydroxymethyl group from 5,10-methylenetetrahydrofolate is transferred onto alpha-ketoisovalerate to form ketopantoate.</text>
</comment>
<comment type="catalytic activity">
    <reaction evidence="1">
        <text>3-methyl-2-oxobutanoate + (6R)-5,10-methylene-5,6,7,8-tetrahydrofolate + H2O = 2-dehydropantoate + (6S)-5,6,7,8-tetrahydrofolate</text>
        <dbReference type="Rhea" id="RHEA:11824"/>
        <dbReference type="ChEBI" id="CHEBI:11561"/>
        <dbReference type="ChEBI" id="CHEBI:11851"/>
        <dbReference type="ChEBI" id="CHEBI:15377"/>
        <dbReference type="ChEBI" id="CHEBI:15636"/>
        <dbReference type="ChEBI" id="CHEBI:57453"/>
        <dbReference type="EC" id="2.1.2.11"/>
    </reaction>
</comment>
<comment type="cofactor">
    <cofactor evidence="1">
        <name>Mg(2+)</name>
        <dbReference type="ChEBI" id="CHEBI:18420"/>
    </cofactor>
    <text evidence="1">Binds 1 Mg(2+) ion per subunit.</text>
</comment>
<comment type="pathway">
    <text evidence="1">Cofactor biosynthesis; (R)-pantothenate biosynthesis; (R)-pantoate from 3-methyl-2-oxobutanoate: step 1/2.</text>
</comment>
<comment type="subunit">
    <text evidence="1">Homodecamer; pentamer of dimers.</text>
</comment>
<comment type="subcellular location">
    <subcellularLocation>
        <location evidence="1">Cytoplasm</location>
    </subcellularLocation>
</comment>
<comment type="similarity">
    <text evidence="1">Belongs to the PanB family.</text>
</comment>
<comment type="sequence caution" evidence="2">
    <conflict type="erroneous initiation">
        <sequence resource="EMBL-CDS" id="ABD22920"/>
    </conflict>
</comment>